<feature type="chain" id="PRO_1000205340" description="DNA repair and recombination protein RadB">
    <location>
        <begin position="1"/>
        <end position="228"/>
    </location>
</feature>
<sequence>MLTTGSKNLDALLGGGIDKGILTQVYGPFATGKTTLAMQIGLLNEGKVAYIDTEGGFSPERLAKMVESRGMDSNSTLQKFLIFEAFDFKEQKKTISNLKKIVNEKFSMIVVDSITNHYRVEEKKSSMTTDLGKQLQVLLWLARKYNLAVIVTNQVYFDSKQNALKPLAEHIMGYKCKDILRLEKLRPGLRIAVLERHRFKPEGGIVHFEITDKGIEDIEKIKSSQTTL</sequence>
<reference key="1">
    <citation type="journal article" date="2009" name="Appl. Environ. Microbiol.">
        <title>Metabolic versatility and indigenous origin of the archaeon Thermococcus sibiricus, isolated from a siberian oil reservoir, as revealed by genome analysis.</title>
        <authorList>
            <person name="Mardanov A.V."/>
            <person name="Ravin N.V."/>
            <person name="Svetlitchnyi V.A."/>
            <person name="Beletsky A.V."/>
            <person name="Miroshnichenko M.L."/>
            <person name="Bonch-Osmolovskaya E.A."/>
            <person name="Skryabin K.G."/>
        </authorList>
    </citation>
    <scope>NUCLEOTIDE SEQUENCE [LARGE SCALE GENOMIC DNA]</scope>
    <source>
        <strain>DSM 12597 / MM 739</strain>
    </source>
</reference>
<comment type="function">
    <text evidence="1">Involved in DNA repair and in homologous recombination. May regulate the cleavage reactions of the branch-structured DNA. Has a very weak ATPase activity that is not stimulated by DNA. Binds DNA but does not promote DNA strands exchange.</text>
</comment>
<comment type="similarity">
    <text evidence="1">Belongs to the eukaryotic RecA-like protein family. RadB subfamily.</text>
</comment>
<evidence type="ECO:0000255" key="1">
    <source>
        <dbReference type="HAMAP-Rule" id="MF_00350"/>
    </source>
</evidence>
<organism>
    <name type="scientific">Thermococcus sibiricus (strain DSM 12597 / MM 739)</name>
    <dbReference type="NCBI Taxonomy" id="604354"/>
    <lineage>
        <taxon>Archaea</taxon>
        <taxon>Methanobacteriati</taxon>
        <taxon>Methanobacteriota</taxon>
        <taxon>Thermococci</taxon>
        <taxon>Thermococcales</taxon>
        <taxon>Thermococcaceae</taxon>
        <taxon>Thermococcus</taxon>
    </lineage>
</organism>
<protein>
    <recommendedName>
        <fullName evidence="1">DNA repair and recombination protein RadB</fullName>
    </recommendedName>
</protein>
<dbReference type="EMBL" id="CP001463">
    <property type="protein sequence ID" value="ACS89176.1"/>
    <property type="molecule type" value="Genomic_DNA"/>
</dbReference>
<dbReference type="RefSeq" id="WP_012766137.1">
    <property type="nucleotide sequence ID" value="NC_012883.1"/>
</dbReference>
<dbReference type="SMR" id="C6A0N1"/>
<dbReference type="STRING" id="604354.TSIB_0108"/>
<dbReference type="GeneID" id="8095077"/>
<dbReference type="KEGG" id="tsi:TSIB_0108"/>
<dbReference type="eggNOG" id="arCOG00417">
    <property type="taxonomic scope" value="Archaea"/>
</dbReference>
<dbReference type="HOGENOM" id="CLU_041732_2_0_2"/>
<dbReference type="OrthoDB" id="17644at2157"/>
<dbReference type="Proteomes" id="UP000009079">
    <property type="component" value="Chromosome"/>
</dbReference>
<dbReference type="GO" id="GO:0005524">
    <property type="term" value="F:ATP binding"/>
    <property type="evidence" value="ECO:0007669"/>
    <property type="project" value="UniProtKB-UniRule"/>
</dbReference>
<dbReference type="GO" id="GO:0016887">
    <property type="term" value="F:ATP hydrolysis activity"/>
    <property type="evidence" value="ECO:0007669"/>
    <property type="project" value="InterPro"/>
</dbReference>
<dbReference type="GO" id="GO:0140664">
    <property type="term" value="F:ATP-dependent DNA damage sensor activity"/>
    <property type="evidence" value="ECO:0007669"/>
    <property type="project" value="InterPro"/>
</dbReference>
<dbReference type="GO" id="GO:0003684">
    <property type="term" value="F:damaged DNA binding"/>
    <property type="evidence" value="ECO:0007669"/>
    <property type="project" value="UniProtKB-UniRule"/>
</dbReference>
<dbReference type="GO" id="GO:0006310">
    <property type="term" value="P:DNA recombination"/>
    <property type="evidence" value="ECO:0007669"/>
    <property type="project" value="UniProtKB-UniRule"/>
</dbReference>
<dbReference type="GO" id="GO:0006281">
    <property type="term" value="P:DNA repair"/>
    <property type="evidence" value="ECO:0007669"/>
    <property type="project" value="UniProtKB-UniRule"/>
</dbReference>
<dbReference type="Gene3D" id="3.40.50.300">
    <property type="entry name" value="P-loop containing nucleotide triphosphate hydrolases"/>
    <property type="match status" value="1"/>
</dbReference>
<dbReference type="HAMAP" id="MF_00350">
    <property type="entry name" value="RadB"/>
    <property type="match status" value="1"/>
</dbReference>
<dbReference type="InterPro" id="IPR003593">
    <property type="entry name" value="AAA+_ATPase"/>
</dbReference>
<dbReference type="InterPro" id="IPR013632">
    <property type="entry name" value="DNA_recomb/repair_Rad51_C"/>
</dbReference>
<dbReference type="InterPro" id="IPR011939">
    <property type="entry name" value="DNA_repair_and_recomb_RadB"/>
</dbReference>
<dbReference type="InterPro" id="IPR027417">
    <property type="entry name" value="P-loop_NTPase"/>
</dbReference>
<dbReference type="InterPro" id="IPR020588">
    <property type="entry name" value="RecA_ATP-bd"/>
</dbReference>
<dbReference type="NCBIfam" id="TIGR02237">
    <property type="entry name" value="recomb_radB"/>
    <property type="match status" value="1"/>
</dbReference>
<dbReference type="PANTHER" id="PTHR22942:SF47">
    <property type="entry name" value="DNA REPAIR AND RECOMBINATION PROTEIN RADB"/>
    <property type="match status" value="1"/>
</dbReference>
<dbReference type="PANTHER" id="PTHR22942">
    <property type="entry name" value="RECA/RAD51/RADA DNA STRAND-PAIRING FAMILY MEMBER"/>
    <property type="match status" value="1"/>
</dbReference>
<dbReference type="Pfam" id="PF08423">
    <property type="entry name" value="Rad51"/>
    <property type="match status" value="1"/>
</dbReference>
<dbReference type="PIRSF" id="PIRSF003336">
    <property type="entry name" value="RadB"/>
    <property type="match status" value="1"/>
</dbReference>
<dbReference type="PRINTS" id="PR01874">
    <property type="entry name" value="DNAREPAIRADA"/>
</dbReference>
<dbReference type="SMART" id="SM00382">
    <property type="entry name" value="AAA"/>
    <property type="match status" value="1"/>
</dbReference>
<dbReference type="SUPFAM" id="SSF52540">
    <property type="entry name" value="P-loop containing nucleoside triphosphate hydrolases"/>
    <property type="match status" value="1"/>
</dbReference>
<dbReference type="PROSITE" id="PS50162">
    <property type="entry name" value="RECA_2"/>
    <property type="match status" value="1"/>
</dbReference>
<accession>C6A0N1</accession>
<keyword id="KW-0067">ATP-binding</keyword>
<keyword id="KW-0227">DNA damage</keyword>
<keyword id="KW-0233">DNA recombination</keyword>
<keyword id="KW-0238">DNA-binding</keyword>
<keyword id="KW-0547">Nucleotide-binding</keyword>
<keyword id="KW-1185">Reference proteome</keyword>
<gene>
    <name evidence="1" type="primary">radB</name>
    <name type="ordered locus">TSIB_0108</name>
</gene>
<proteinExistence type="inferred from homology"/>
<name>RADB_THESM</name>